<feature type="chain" id="PRO_0000074636" description="N-alpha-acetyltransferase 40">
    <location>
        <begin position="1"/>
        <end position="285"/>
    </location>
</feature>
<feature type="domain" description="N-acetyltransferase" evidence="2">
    <location>
        <begin position="88"/>
        <end position="274"/>
    </location>
</feature>
<feature type="binding site" evidence="1">
    <location>
        <position position="116"/>
    </location>
    <ligand>
        <name>substrate</name>
    </ligand>
</feature>
<feature type="binding site" evidence="1">
    <location>
        <begin position="163"/>
        <end position="165"/>
    </location>
    <ligand>
        <name>substrate</name>
    </ligand>
</feature>
<feature type="binding site" evidence="1">
    <location>
        <position position="185"/>
    </location>
    <ligand>
        <name>substrate</name>
    </ligand>
</feature>
<feature type="binding site" evidence="1">
    <location>
        <begin position="187"/>
        <end position="189"/>
    </location>
    <ligand>
        <name>acetyl-CoA</name>
        <dbReference type="ChEBI" id="CHEBI:57288"/>
    </ligand>
</feature>
<feature type="binding site" evidence="1">
    <location>
        <begin position="195"/>
        <end position="200"/>
    </location>
    <ligand>
        <name>acetyl-CoA</name>
        <dbReference type="ChEBI" id="CHEBI:57288"/>
    </ligand>
</feature>
<feature type="binding site" evidence="1">
    <location>
        <position position="228"/>
    </location>
    <ligand>
        <name>substrate</name>
    </ligand>
</feature>
<feature type="binding site" evidence="1">
    <location>
        <position position="233"/>
    </location>
    <ligand>
        <name>acetyl-CoA</name>
        <dbReference type="ChEBI" id="CHEBI:57288"/>
    </ligand>
</feature>
<feature type="site" description="Essential for catalytic activity" evidence="1">
    <location>
        <position position="186"/>
    </location>
</feature>
<accession>Q04751</accession>
<accession>D6VZP3</accession>
<reference key="1">
    <citation type="journal article" date="1997" name="Nature">
        <title>The nucleotide sequence of Saccharomyces cerevisiae chromosome XIII.</title>
        <authorList>
            <person name="Bowman S."/>
            <person name="Churcher C.M."/>
            <person name="Badcock K."/>
            <person name="Brown D."/>
            <person name="Chillingworth T."/>
            <person name="Connor R."/>
            <person name="Dedman K."/>
            <person name="Devlin K."/>
            <person name="Gentles S."/>
            <person name="Hamlin N."/>
            <person name="Hunt S."/>
            <person name="Jagels K."/>
            <person name="Lye G."/>
            <person name="Moule S."/>
            <person name="Odell C."/>
            <person name="Pearson D."/>
            <person name="Rajandream M.A."/>
            <person name="Rice P."/>
            <person name="Skelton J."/>
            <person name="Walsh S.V."/>
            <person name="Whitehead S."/>
            <person name="Barrell B.G."/>
        </authorList>
    </citation>
    <scope>NUCLEOTIDE SEQUENCE [LARGE SCALE GENOMIC DNA]</scope>
    <source>
        <strain>ATCC 204508 / S288c</strain>
    </source>
</reference>
<reference key="2">
    <citation type="journal article" date="2014" name="G3 (Bethesda)">
        <title>The reference genome sequence of Saccharomyces cerevisiae: Then and now.</title>
        <authorList>
            <person name="Engel S.R."/>
            <person name="Dietrich F.S."/>
            <person name="Fisk D.G."/>
            <person name="Binkley G."/>
            <person name="Balakrishnan R."/>
            <person name="Costanzo M.C."/>
            <person name="Dwight S.S."/>
            <person name="Hitz B.C."/>
            <person name="Karra K."/>
            <person name="Nash R.S."/>
            <person name="Weng S."/>
            <person name="Wong E.D."/>
            <person name="Lloyd P."/>
            <person name="Skrzypek M.S."/>
            <person name="Miyasato S.R."/>
            <person name="Simison M."/>
            <person name="Cherry J.M."/>
        </authorList>
    </citation>
    <scope>GENOME REANNOTATION</scope>
    <source>
        <strain>ATCC 204508 / S288c</strain>
    </source>
</reference>
<reference key="3">
    <citation type="journal article" date="2007" name="Genome Res.">
        <title>Approaching a complete repository of sequence-verified protein-encoding clones for Saccharomyces cerevisiae.</title>
        <authorList>
            <person name="Hu Y."/>
            <person name="Rolfs A."/>
            <person name="Bhullar B."/>
            <person name="Murthy T.V.S."/>
            <person name="Zhu C."/>
            <person name="Berger M.F."/>
            <person name="Camargo A.A."/>
            <person name="Kelley F."/>
            <person name="McCarron S."/>
            <person name="Jepson D."/>
            <person name="Richardson A."/>
            <person name="Raphael J."/>
            <person name="Moreira D."/>
            <person name="Taycher E."/>
            <person name="Zuo D."/>
            <person name="Mohr S."/>
            <person name="Kane M.F."/>
            <person name="Williamson J."/>
            <person name="Simpson A.J.G."/>
            <person name="Bulyk M.L."/>
            <person name="Harlow E."/>
            <person name="Marsischky G."/>
            <person name="Kolodner R.D."/>
            <person name="LaBaer J."/>
        </authorList>
    </citation>
    <scope>NUCLEOTIDE SEQUENCE [GENOMIC DNA]</scope>
    <source>
        <strain>ATCC 204508 / S288c</strain>
    </source>
</reference>
<reference key="4">
    <citation type="journal article" date="2003" name="J. Biol. Chem.">
        <title>An Nalpha-acetyltransferase responsible for acetylation of the N-terminal residues of histones H4 and H2A.</title>
        <authorList>
            <person name="Song O.-K."/>
            <person name="Wang X."/>
            <person name="Waterborg J.H."/>
            <person name="Sternglanz R."/>
        </authorList>
    </citation>
    <scope>FUNCTION</scope>
</reference>
<reference key="5">
    <citation type="journal article" date="2003" name="Nature">
        <title>Global analysis of protein localization in budding yeast.</title>
        <authorList>
            <person name="Huh W.-K."/>
            <person name="Falvo J.V."/>
            <person name="Gerke L.C."/>
            <person name="Carroll A.S."/>
            <person name="Howson R.W."/>
            <person name="Weissman J.S."/>
            <person name="O'Shea E.K."/>
        </authorList>
    </citation>
    <scope>SUBCELLULAR LOCATION [LARGE SCALE ANALYSIS]</scope>
</reference>
<reference key="6">
    <citation type="journal article" date="2008" name="Mol. Cell. Proteomics">
        <title>A multidimensional chromatography technology for in-depth phosphoproteome analysis.</title>
        <authorList>
            <person name="Albuquerque C.P."/>
            <person name="Smolka M.B."/>
            <person name="Payne S.H."/>
            <person name="Bafna V."/>
            <person name="Eng J."/>
            <person name="Zhou H."/>
        </authorList>
    </citation>
    <scope>IDENTIFICATION BY MASS SPECTROMETRY [LARGE SCALE ANALYSIS]</scope>
</reference>
<name>NAA40_YEAST</name>
<comment type="function">
    <text evidence="3">N-alpha-acetyltransferase that specifically mediates the acetylation of the N-terminal residues of histones H4 and H2A.</text>
</comment>
<comment type="catalytic activity">
    <reaction evidence="6">
        <text>N-terminal L-seryl-[histone H4] + acetyl-CoA = N-terminal N(alpha)-acetyl-L-seryl-[histone H4] + CoA + H(+)</text>
        <dbReference type="Rhea" id="RHEA:50596"/>
        <dbReference type="Rhea" id="RHEA-COMP:12740"/>
        <dbReference type="Rhea" id="RHEA-COMP:12743"/>
        <dbReference type="ChEBI" id="CHEBI:15378"/>
        <dbReference type="ChEBI" id="CHEBI:57287"/>
        <dbReference type="ChEBI" id="CHEBI:57288"/>
        <dbReference type="ChEBI" id="CHEBI:64738"/>
        <dbReference type="ChEBI" id="CHEBI:83690"/>
        <dbReference type="EC" id="2.3.1.257"/>
    </reaction>
</comment>
<comment type="catalytic activity">
    <reaction evidence="6">
        <text>N-terminal L-seryl-[histone H2A] + acetyl-CoA = N-terminal N(alpha)-acetyl-L-seryl-[histone H2A] + CoA + H(+)</text>
        <dbReference type="Rhea" id="RHEA:50600"/>
        <dbReference type="Rhea" id="RHEA-COMP:12742"/>
        <dbReference type="Rhea" id="RHEA-COMP:12744"/>
        <dbReference type="ChEBI" id="CHEBI:15378"/>
        <dbReference type="ChEBI" id="CHEBI:57287"/>
        <dbReference type="ChEBI" id="CHEBI:57288"/>
        <dbReference type="ChEBI" id="CHEBI:64738"/>
        <dbReference type="ChEBI" id="CHEBI:83690"/>
        <dbReference type="EC" id="2.3.1.257"/>
    </reaction>
</comment>
<comment type="subcellular location">
    <subcellularLocation>
        <location evidence="4">Nucleus</location>
    </subcellularLocation>
    <subcellularLocation>
        <location evidence="4">Cytoplasm</location>
    </subcellularLocation>
</comment>
<comment type="similarity">
    <text evidence="5">Belongs to the acetyltransferase family. NAA40 subfamily.</text>
</comment>
<sequence length="285" mass="32334">MRSSVYSENTYNCIRTSKEHLTERRRVAMAPMFQHFLNLCVEKFPESIEHKDTDGNGNFTTAILEREIIYIPEDDTDSIDSVDSLKCINYKLHKSRGDQVLDACVQLIDKHLGAKYRRASRIMYGNRKPWKANKLAEMKSAGLVYVCYWDNGVLGAFTSFMLTEETGLVEGDALHEVSVPVIYLYEVHVASAHRGHGIGRRLLEHALCDGVARHTRRMCDNFFGVALTVFSDNTRARRLYEALGFYRAPGSPAPASPTIRHTRHGGGRVVVPCDPLYYVYCLHMP</sequence>
<protein>
    <recommendedName>
        <fullName evidence="1">N-alpha-acetyltransferase 40</fullName>
        <ecNumber evidence="6">2.3.1.257</ecNumber>
    </recommendedName>
    <alternativeName>
        <fullName evidence="5">Histone-specific N-acetyltransferase NAT4</fullName>
    </alternativeName>
</protein>
<keyword id="KW-0012">Acyltransferase</keyword>
<keyword id="KW-0963">Cytoplasm</keyword>
<keyword id="KW-0539">Nucleus</keyword>
<keyword id="KW-1185">Reference proteome</keyword>
<keyword id="KW-0808">Transferase</keyword>
<dbReference type="EC" id="2.3.1.257" evidence="6"/>
<dbReference type="EMBL" id="Z48952">
    <property type="protein sequence ID" value="CAA88794.1"/>
    <property type="molecule type" value="Genomic_DNA"/>
</dbReference>
<dbReference type="EMBL" id="AY557984">
    <property type="protein sequence ID" value="AAS56310.1"/>
    <property type="molecule type" value="Genomic_DNA"/>
</dbReference>
<dbReference type="EMBL" id="BK006946">
    <property type="protein sequence ID" value="DAA09967.1"/>
    <property type="molecule type" value="Genomic_DNA"/>
</dbReference>
<dbReference type="PIR" id="S52829">
    <property type="entry name" value="S52829"/>
</dbReference>
<dbReference type="RefSeq" id="NP_013785.1">
    <property type="nucleotide sequence ID" value="NM_001182567.1"/>
</dbReference>
<dbReference type="SMR" id="Q04751"/>
<dbReference type="BioGRID" id="35244">
    <property type="interactions" value="98"/>
</dbReference>
<dbReference type="DIP" id="DIP-2745N"/>
<dbReference type="FunCoup" id="Q04751">
    <property type="interactions" value="166"/>
</dbReference>
<dbReference type="IntAct" id="Q04751">
    <property type="interactions" value="3"/>
</dbReference>
<dbReference type="MINT" id="Q04751"/>
<dbReference type="STRING" id="4932.YMR069W"/>
<dbReference type="iPTMnet" id="Q04751"/>
<dbReference type="PaxDb" id="4932-YMR069W"/>
<dbReference type="PeptideAtlas" id="Q04751"/>
<dbReference type="EnsemblFungi" id="YMR069W_mRNA">
    <property type="protein sequence ID" value="YMR069W"/>
    <property type="gene ID" value="YMR069W"/>
</dbReference>
<dbReference type="GeneID" id="855091"/>
<dbReference type="KEGG" id="sce:YMR069W"/>
<dbReference type="AGR" id="SGD:S000004673"/>
<dbReference type="SGD" id="S000004673">
    <property type="gene designation" value="NAT4"/>
</dbReference>
<dbReference type="VEuPathDB" id="FungiDB:YMR069W"/>
<dbReference type="eggNOG" id="KOG2488">
    <property type="taxonomic scope" value="Eukaryota"/>
</dbReference>
<dbReference type="HOGENOM" id="CLU_087674_0_0_1"/>
<dbReference type="InParanoid" id="Q04751"/>
<dbReference type="OMA" id="IYLYEIQ"/>
<dbReference type="OrthoDB" id="424551at2759"/>
<dbReference type="BioCyc" id="YEAST:G3O-32771-MONOMER"/>
<dbReference type="BRENDA" id="2.3.1.48">
    <property type="organism ID" value="984"/>
</dbReference>
<dbReference type="BioGRID-ORCS" id="855091">
    <property type="hits" value="0 hits in 10 CRISPR screens"/>
</dbReference>
<dbReference type="PRO" id="PR:Q04751"/>
<dbReference type="Proteomes" id="UP000002311">
    <property type="component" value="Chromosome XIII"/>
</dbReference>
<dbReference type="RNAct" id="Q04751">
    <property type="molecule type" value="protein"/>
</dbReference>
<dbReference type="GO" id="GO:0005737">
    <property type="term" value="C:cytoplasm"/>
    <property type="evidence" value="ECO:0007005"/>
    <property type="project" value="SGD"/>
</dbReference>
<dbReference type="GO" id="GO:0005634">
    <property type="term" value="C:nucleus"/>
    <property type="evidence" value="ECO:0007005"/>
    <property type="project" value="SGD"/>
</dbReference>
<dbReference type="GO" id="GO:0043998">
    <property type="term" value="F:histone H2A acetyltransferase activity"/>
    <property type="evidence" value="ECO:0000315"/>
    <property type="project" value="SGD"/>
</dbReference>
<dbReference type="GO" id="GO:0010485">
    <property type="term" value="F:histone H4 acetyltransferase activity"/>
    <property type="evidence" value="ECO:0000314"/>
    <property type="project" value="SGD"/>
</dbReference>
<dbReference type="GO" id="GO:1990189">
    <property type="term" value="F:protein N-terminal-serine acetyltransferase activity"/>
    <property type="evidence" value="ECO:0000318"/>
    <property type="project" value="GO_Central"/>
</dbReference>
<dbReference type="GO" id="GO:0031507">
    <property type="term" value="P:heterochromatin formation"/>
    <property type="evidence" value="ECO:0000315"/>
    <property type="project" value="SGD"/>
</dbReference>
<dbReference type="CDD" id="cd04301">
    <property type="entry name" value="NAT_SF"/>
    <property type="match status" value="1"/>
</dbReference>
<dbReference type="FunFam" id="3.40.630.30:FF:000219">
    <property type="entry name" value="Nat4p"/>
    <property type="match status" value="1"/>
</dbReference>
<dbReference type="Gene3D" id="3.40.630.30">
    <property type="match status" value="1"/>
</dbReference>
<dbReference type="InterPro" id="IPR016181">
    <property type="entry name" value="Acyl_CoA_acyltransferase"/>
</dbReference>
<dbReference type="InterPro" id="IPR000182">
    <property type="entry name" value="GNAT_dom"/>
</dbReference>
<dbReference type="InterPro" id="IPR039949">
    <property type="entry name" value="NAA40"/>
</dbReference>
<dbReference type="PANTHER" id="PTHR20531">
    <property type="entry name" value="N-ALPHA-ACETYLTRANSFERASE 40"/>
    <property type="match status" value="1"/>
</dbReference>
<dbReference type="PANTHER" id="PTHR20531:SF1">
    <property type="entry name" value="N-ALPHA-ACETYLTRANSFERASE 40"/>
    <property type="match status" value="1"/>
</dbReference>
<dbReference type="Pfam" id="PF00583">
    <property type="entry name" value="Acetyltransf_1"/>
    <property type="match status" value="1"/>
</dbReference>
<dbReference type="SUPFAM" id="SSF55729">
    <property type="entry name" value="Acyl-CoA N-acyltransferases (Nat)"/>
    <property type="match status" value="1"/>
</dbReference>
<dbReference type="PROSITE" id="PS51186">
    <property type="entry name" value="GNAT"/>
    <property type="match status" value="1"/>
</dbReference>
<evidence type="ECO:0000250" key="1">
    <source>
        <dbReference type="UniProtKB" id="Q86UY6"/>
    </source>
</evidence>
<evidence type="ECO:0000255" key="2">
    <source>
        <dbReference type="PROSITE-ProRule" id="PRU00532"/>
    </source>
</evidence>
<evidence type="ECO:0000269" key="3">
    <source>
    </source>
</evidence>
<evidence type="ECO:0000269" key="4">
    <source>
    </source>
</evidence>
<evidence type="ECO:0000305" key="5"/>
<evidence type="ECO:0000305" key="6">
    <source>
    </source>
</evidence>
<evidence type="ECO:0000312" key="7">
    <source>
        <dbReference type="SGD" id="S000004673"/>
    </source>
</evidence>
<gene>
    <name evidence="7" type="primary">NAT4</name>
    <name type="ordered locus">YMR069W</name>
    <name type="ORF">YM9916.08</name>
</gene>
<proteinExistence type="evidence at protein level"/>
<organism>
    <name type="scientific">Saccharomyces cerevisiae (strain ATCC 204508 / S288c)</name>
    <name type="common">Baker's yeast</name>
    <dbReference type="NCBI Taxonomy" id="559292"/>
    <lineage>
        <taxon>Eukaryota</taxon>
        <taxon>Fungi</taxon>
        <taxon>Dikarya</taxon>
        <taxon>Ascomycota</taxon>
        <taxon>Saccharomycotina</taxon>
        <taxon>Saccharomycetes</taxon>
        <taxon>Saccharomycetales</taxon>
        <taxon>Saccharomycetaceae</taxon>
        <taxon>Saccharomyces</taxon>
    </lineage>
</organism>